<proteinExistence type="predicted"/>
<keyword id="KW-1029">Fimbrium biogenesis</keyword>
<dbReference type="EMBL" id="X52405">
    <property type="protein sequence ID" value="CAA36653.1"/>
    <property type="molecule type" value="Genomic_DNA"/>
</dbReference>
<dbReference type="EMBL" id="X52406">
    <property type="protein sequence ID" value="CAA36655.1"/>
    <property type="molecule type" value="Genomic_DNA"/>
</dbReference>
<dbReference type="PIR" id="S15242">
    <property type="entry name" value="S15242"/>
</dbReference>
<feature type="chain" id="PRO_0000087245" description="Fimbrial assembly protein, serogroups C1 and C2">
    <location>
        <begin position="1"/>
        <end position="131" status="greater than"/>
    </location>
</feature>
<feature type="non-terminal residue">
    <location>
        <position position="131"/>
    </location>
</feature>
<accession>P17830</accession>
<organism>
    <name type="scientific">Dichelobacter nodosus</name>
    <name type="common">Bacteroides nodosus</name>
    <dbReference type="NCBI Taxonomy" id="870"/>
    <lineage>
        <taxon>Bacteria</taxon>
        <taxon>Pseudomonadati</taxon>
        <taxon>Pseudomonadota</taxon>
        <taxon>Gammaproteobacteria</taxon>
        <taxon>Cardiobacteriales</taxon>
        <taxon>Cardiobacteriaceae</taxon>
        <taxon>Dichelobacter</taxon>
    </lineage>
</organism>
<reference key="1">
    <citation type="journal article" date="1991" name="Mol. Microbiol.">
        <title>Organization of the fimbrial gene region of Bacteroides nodosus: class I and class II strains.</title>
        <authorList>
            <person name="Hobbs M."/>
            <person name="Dalrymple B.P."/>
            <person name="Cox P.T."/>
            <person name="Livingstone S.P."/>
            <person name="Delaney S.F."/>
            <person name="Mattick J.S."/>
        </authorList>
    </citation>
    <scope>NUCLEOTIDE SEQUENCE [GENOMIC DNA]</scope>
    <source>
        <strain>Serogroup C1/VCS1008</strain>
        <strain>Serogroup C2/VCS1617</strain>
    </source>
</reference>
<gene>
    <name type="primary">fimB</name>
</gene>
<sequence>MNKQRFLFAAKISGIHFLLSLTVAALLAGLIFFVWYPFPYQKIMGNFKLFFLISGIDVCCGPLLTFILSNPQKRLKECIIDFSLIIFIQLSAFIYGMYNIYLARPVAVVFELDSIRILSKGDILLDELPQA</sequence>
<name>FIMBC_DICNO</name>
<protein>
    <recommendedName>
        <fullName>Fimbrial assembly protein, serogroups C1 and C2</fullName>
    </recommendedName>
</protein>